<gene>
    <name evidence="2" type="primary">rpsL</name>
    <name type="ordered locus">Sbal223_4061</name>
</gene>
<comment type="function">
    <text evidence="2">With S4 and S5 plays an important role in translational accuracy.</text>
</comment>
<comment type="function">
    <text evidence="2">Interacts with and stabilizes bases of the 16S rRNA that are involved in tRNA selection in the A site and with the mRNA backbone. Located at the interface of the 30S and 50S subunits, it traverses the body of the 30S subunit contacting proteins on the other side and probably holding the rRNA structure together. The combined cluster of proteins S8, S12 and S17 appears to hold together the shoulder and platform of the 30S subunit.</text>
</comment>
<comment type="subunit">
    <text evidence="2">Part of the 30S ribosomal subunit. Contacts proteins S8 and S17. May interact with IF1 in the 30S initiation complex.</text>
</comment>
<comment type="similarity">
    <text evidence="2">Belongs to the universal ribosomal protein uS12 family.</text>
</comment>
<organism>
    <name type="scientific">Shewanella baltica (strain OS223)</name>
    <dbReference type="NCBI Taxonomy" id="407976"/>
    <lineage>
        <taxon>Bacteria</taxon>
        <taxon>Pseudomonadati</taxon>
        <taxon>Pseudomonadota</taxon>
        <taxon>Gammaproteobacteria</taxon>
        <taxon>Alteromonadales</taxon>
        <taxon>Shewanellaceae</taxon>
        <taxon>Shewanella</taxon>
    </lineage>
</organism>
<keyword id="KW-0488">Methylation</keyword>
<keyword id="KW-0687">Ribonucleoprotein</keyword>
<keyword id="KW-0689">Ribosomal protein</keyword>
<keyword id="KW-0694">RNA-binding</keyword>
<keyword id="KW-0699">rRNA-binding</keyword>
<keyword id="KW-0820">tRNA-binding</keyword>
<dbReference type="EMBL" id="CP001252">
    <property type="protein sequence ID" value="ACK48534.1"/>
    <property type="molecule type" value="Genomic_DNA"/>
</dbReference>
<dbReference type="RefSeq" id="WP_006083605.1">
    <property type="nucleotide sequence ID" value="NC_011663.1"/>
</dbReference>
<dbReference type="SMR" id="B8EBL0"/>
<dbReference type="GeneID" id="11770554"/>
<dbReference type="KEGG" id="sbp:Sbal223_4061"/>
<dbReference type="HOGENOM" id="CLU_104295_1_2_6"/>
<dbReference type="Proteomes" id="UP000002507">
    <property type="component" value="Chromosome"/>
</dbReference>
<dbReference type="GO" id="GO:0015935">
    <property type="term" value="C:small ribosomal subunit"/>
    <property type="evidence" value="ECO:0007669"/>
    <property type="project" value="InterPro"/>
</dbReference>
<dbReference type="GO" id="GO:0019843">
    <property type="term" value="F:rRNA binding"/>
    <property type="evidence" value="ECO:0007669"/>
    <property type="project" value="UniProtKB-UniRule"/>
</dbReference>
<dbReference type="GO" id="GO:0003735">
    <property type="term" value="F:structural constituent of ribosome"/>
    <property type="evidence" value="ECO:0007669"/>
    <property type="project" value="InterPro"/>
</dbReference>
<dbReference type="GO" id="GO:0000049">
    <property type="term" value="F:tRNA binding"/>
    <property type="evidence" value="ECO:0007669"/>
    <property type="project" value="UniProtKB-UniRule"/>
</dbReference>
<dbReference type="GO" id="GO:0006412">
    <property type="term" value="P:translation"/>
    <property type="evidence" value="ECO:0007669"/>
    <property type="project" value="UniProtKB-UniRule"/>
</dbReference>
<dbReference type="CDD" id="cd03368">
    <property type="entry name" value="Ribosomal_S12"/>
    <property type="match status" value="1"/>
</dbReference>
<dbReference type="FunFam" id="2.40.50.140:FF:000001">
    <property type="entry name" value="30S ribosomal protein S12"/>
    <property type="match status" value="1"/>
</dbReference>
<dbReference type="Gene3D" id="2.40.50.140">
    <property type="entry name" value="Nucleic acid-binding proteins"/>
    <property type="match status" value="1"/>
</dbReference>
<dbReference type="HAMAP" id="MF_00403_B">
    <property type="entry name" value="Ribosomal_uS12_B"/>
    <property type="match status" value="1"/>
</dbReference>
<dbReference type="InterPro" id="IPR012340">
    <property type="entry name" value="NA-bd_OB-fold"/>
</dbReference>
<dbReference type="InterPro" id="IPR006032">
    <property type="entry name" value="Ribosomal_uS12"/>
</dbReference>
<dbReference type="InterPro" id="IPR005679">
    <property type="entry name" value="Ribosomal_uS12_bac"/>
</dbReference>
<dbReference type="NCBIfam" id="TIGR00981">
    <property type="entry name" value="rpsL_bact"/>
    <property type="match status" value="1"/>
</dbReference>
<dbReference type="PANTHER" id="PTHR11652">
    <property type="entry name" value="30S RIBOSOMAL PROTEIN S12 FAMILY MEMBER"/>
    <property type="match status" value="1"/>
</dbReference>
<dbReference type="Pfam" id="PF00164">
    <property type="entry name" value="Ribosom_S12_S23"/>
    <property type="match status" value="1"/>
</dbReference>
<dbReference type="PIRSF" id="PIRSF002133">
    <property type="entry name" value="Ribosomal_S12/S23"/>
    <property type="match status" value="1"/>
</dbReference>
<dbReference type="PRINTS" id="PR01034">
    <property type="entry name" value="RIBOSOMALS12"/>
</dbReference>
<dbReference type="SUPFAM" id="SSF50249">
    <property type="entry name" value="Nucleic acid-binding proteins"/>
    <property type="match status" value="1"/>
</dbReference>
<dbReference type="PROSITE" id="PS00055">
    <property type="entry name" value="RIBOSOMAL_S12"/>
    <property type="match status" value="1"/>
</dbReference>
<evidence type="ECO:0000250" key="1"/>
<evidence type="ECO:0000255" key="2">
    <source>
        <dbReference type="HAMAP-Rule" id="MF_00403"/>
    </source>
</evidence>
<evidence type="ECO:0000305" key="3"/>
<protein>
    <recommendedName>
        <fullName evidence="2">Small ribosomal subunit protein uS12</fullName>
    </recommendedName>
    <alternativeName>
        <fullName evidence="3">30S ribosomal protein S12</fullName>
    </alternativeName>
</protein>
<sequence>MATVNQLVRKPRAPKVDKTNVPALNACPQKRGVCTRVYTTTPKKPNSALRKVARVRLTNGFEVTSYIGGEGHNLQEHSVILIRGGRVKDLPGVRYHTIRGALDCAGVTSRRQSRSKYGAKRPKS</sequence>
<name>RS12_SHEB2</name>
<feature type="chain" id="PRO_1000134653" description="Small ribosomal subunit protein uS12">
    <location>
        <begin position="1"/>
        <end position="124"/>
    </location>
</feature>
<feature type="modified residue" description="3-methylthioaspartic acid" evidence="1">
    <location>
        <position position="89"/>
    </location>
</feature>
<proteinExistence type="inferred from homology"/>
<accession>B8EBL0</accession>
<reference key="1">
    <citation type="submission" date="2008-12" db="EMBL/GenBank/DDBJ databases">
        <title>Complete sequence of chromosome of Shewanella baltica OS223.</title>
        <authorList>
            <consortium name="US DOE Joint Genome Institute"/>
            <person name="Lucas S."/>
            <person name="Copeland A."/>
            <person name="Lapidus A."/>
            <person name="Glavina del Rio T."/>
            <person name="Dalin E."/>
            <person name="Tice H."/>
            <person name="Bruce D."/>
            <person name="Goodwin L."/>
            <person name="Pitluck S."/>
            <person name="Chertkov O."/>
            <person name="Meincke L."/>
            <person name="Brettin T."/>
            <person name="Detter J.C."/>
            <person name="Han C."/>
            <person name="Kuske C.R."/>
            <person name="Larimer F."/>
            <person name="Land M."/>
            <person name="Hauser L."/>
            <person name="Kyrpides N."/>
            <person name="Ovchinnikova G."/>
            <person name="Brettar I."/>
            <person name="Rodrigues J."/>
            <person name="Konstantinidis K."/>
            <person name="Tiedje J."/>
        </authorList>
    </citation>
    <scope>NUCLEOTIDE SEQUENCE [LARGE SCALE GENOMIC DNA]</scope>
    <source>
        <strain>OS223</strain>
    </source>
</reference>